<proteinExistence type="inferred from homology"/>
<protein>
    <recommendedName>
        <fullName>ATP-dependent RNA helicase DHH1</fullName>
        <ecNumber>3.6.4.13</ecNumber>
    </recommendedName>
</protein>
<organism>
    <name type="scientific">Cryptococcus neoformans var. neoformans serotype D (strain B-3501A)</name>
    <name type="common">Filobasidiella neoformans</name>
    <dbReference type="NCBI Taxonomy" id="283643"/>
    <lineage>
        <taxon>Eukaryota</taxon>
        <taxon>Fungi</taxon>
        <taxon>Dikarya</taxon>
        <taxon>Basidiomycota</taxon>
        <taxon>Agaricomycotina</taxon>
        <taxon>Tremellomycetes</taxon>
        <taxon>Tremellales</taxon>
        <taxon>Cryptococcaceae</taxon>
        <taxon>Cryptococcus</taxon>
        <taxon>Cryptococcus neoformans species complex</taxon>
    </lineage>
</organism>
<reference key="1">
    <citation type="journal article" date="2005" name="Science">
        <title>The genome of the basidiomycetous yeast and human pathogen Cryptococcus neoformans.</title>
        <authorList>
            <person name="Loftus B.J."/>
            <person name="Fung E."/>
            <person name="Roncaglia P."/>
            <person name="Rowley D."/>
            <person name="Amedeo P."/>
            <person name="Bruno D."/>
            <person name="Vamathevan J."/>
            <person name="Miranda M."/>
            <person name="Anderson I.J."/>
            <person name="Fraser J.A."/>
            <person name="Allen J.E."/>
            <person name="Bosdet I.E."/>
            <person name="Brent M.R."/>
            <person name="Chiu R."/>
            <person name="Doering T.L."/>
            <person name="Donlin M.J."/>
            <person name="D'Souza C.A."/>
            <person name="Fox D.S."/>
            <person name="Grinberg V."/>
            <person name="Fu J."/>
            <person name="Fukushima M."/>
            <person name="Haas B.J."/>
            <person name="Huang J.C."/>
            <person name="Janbon G."/>
            <person name="Jones S.J.M."/>
            <person name="Koo H.L."/>
            <person name="Krzywinski M.I."/>
            <person name="Kwon-Chung K.J."/>
            <person name="Lengeler K.B."/>
            <person name="Maiti R."/>
            <person name="Marra M.A."/>
            <person name="Marra R.E."/>
            <person name="Mathewson C.A."/>
            <person name="Mitchell T.G."/>
            <person name="Pertea M."/>
            <person name="Riggs F.R."/>
            <person name="Salzberg S.L."/>
            <person name="Schein J.E."/>
            <person name="Shvartsbeyn A."/>
            <person name="Shin H."/>
            <person name="Shumway M."/>
            <person name="Specht C.A."/>
            <person name="Suh B.B."/>
            <person name="Tenney A."/>
            <person name="Utterback T.R."/>
            <person name="Wickes B.L."/>
            <person name="Wortman J.R."/>
            <person name="Wye N.H."/>
            <person name="Kronstad J.W."/>
            <person name="Lodge J.K."/>
            <person name="Heitman J."/>
            <person name="Davis R.W."/>
            <person name="Fraser C.M."/>
            <person name="Hyman R.W."/>
        </authorList>
    </citation>
    <scope>NUCLEOTIDE SEQUENCE [LARGE SCALE GENOMIC DNA]</scope>
    <source>
        <strain>B-3501A</strain>
    </source>
</reference>
<comment type="function">
    <text evidence="1">ATP-dependent RNA helicase involved in mRNA turnover, and more specifically in mRNA decapping. Is involved in G1/S DNA-damage checkpoint recovery, probably through the regulation of the translational status of a subset of mRNAs. May also have a role in translation and mRNA nuclear export (By similarity).</text>
</comment>
<comment type="catalytic activity">
    <reaction>
        <text>ATP + H2O = ADP + phosphate + H(+)</text>
        <dbReference type="Rhea" id="RHEA:13065"/>
        <dbReference type="ChEBI" id="CHEBI:15377"/>
        <dbReference type="ChEBI" id="CHEBI:15378"/>
        <dbReference type="ChEBI" id="CHEBI:30616"/>
        <dbReference type="ChEBI" id="CHEBI:43474"/>
        <dbReference type="ChEBI" id="CHEBI:456216"/>
        <dbReference type="EC" id="3.6.4.13"/>
    </reaction>
</comment>
<comment type="subcellular location">
    <subcellularLocation>
        <location evidence="1">Cytoplasm</location>
        <location evidence="1">P-body</location>
    </subcellularLocation>
    <text evidence="1">Is concentrated in several cytoplasmic foci called P bodies (or cytoplasmic processing bodies) which represent sites of mRNA decapping and 5' to 3' exonucleotidic decay.</text>
</comment>
<comment type="domain">
    <text>The Q motif is unique to and characteristic of the DEAD box family of RNA helicases and controls ATP binding and hydrolysis.</text>
</comment>
<comment type="similarity">
    <text evidence="5">Belongs to the DEAD box helicase family. DDX6/DHH1 subfamily.</text>
</comment>
<feature type="chain" id="PRO_0000410251" description="ATP-dependent RNA helicase DHH1">
    <location>
        <begin position="1"/>
        <end position="625"/>
    </location>
</feature>
<feature type="domain" description="Helicase ATP-binding" evidence="2">
    <location>
        <begin position="67"/>
        <end position="238"/>
    </location>
</feature>
<feature type="domain" description="Helicase C-terminal" evidence="3">
    <location>
        <begin position="248"/>
        <end position="408"/>
    </location>
</feature>
<feature type="region of interest" description="Disordered" evidence="4">
    <location>
        <begin position="1"/>
        <end position="34"/>
    </location>
</feature>
<feature type="region of interest" description="Disordered" evidence="4">
    <location>
        <begin position="416"/>
        <end position="625"/>
    </location>
</feature>
<feature type="short sequence motif" description="Q motif">
    <location>
        <begin position="36"/>
        <end position="64"/>
    </location>
</feature>
<feature type="short sequence motif" description="DEAD box">
    <location>
        <begin position="186"/>
        <end position="189"/>
    </location>
</feature>
<feature type="compositionally biased region" description="Low complexity" evidence="4">
    <location>
        <begin position="427"/>
        <end position="441"/>
    </location>
</feature>
<feature type="compositionally biased region" description="Low complexity" evidence="4">
    <location>
        <begin position="450"/>
        <end position="505"/>
    </location>
</feature>
<feature type="compositionally biased region" description="Low complexity" evidence="4">
    <location>
        <begin position="513"/>
        <end position="528"/>
    </location>
</feature>
<feature type="compositionally biased region" description="Low complexity" evidence="4">
    <location>
        <begin position="538"/>
        <end position="586"/>
    </location>
</feature>
<feature type="compositionally biased region" description="Gly residues" evidence="4">
    <location>
        <begin position="604"/>
        <end position="617"/>
    </location>
</feature>
<feature type="binding site" evidence="2">
    <location>
        <begin position="80"/>
        <end position="87"/>
    </location>
    <ligand>
        <name>ATP</name>
        <dbReference type="ChEBI" id="CHEBI:30616"/>
    </ligand>
</feature>
<evidence type="ECO:0000250" key="1"/>
<evidence type="ECO:0000255" key="2">
    <source>
        <dbReference type="PROSITE-ProRule" id="PRU00541"/>
    </source>
</evidence>
<evidence type="ECO:0000255" key="3">
    <source>
        <dbReference type="PROSITE-ProRule" id="PRU00542"/>
    </source>
</evidence>
<evidence type="ECO:0000256" key="4">
    <source>
        <dbReference type="SAM" id="MobiDB-lite"/>
    </source>
</evidence>
<evidence type="ECO:0000305" key="5"/>
<accession>P0CQ81</accession>
<accession>Q55WR5</accession>
<accession>Q5KJI2</accession>
<dbReference type="EC" id="3.6.4.13"/>
<dbReference type="EMBL" id="AAEY01000013">
    <property type="protein sequence ID" value="EAL21934.1"/>
    <property type="molecule type" value="Genomic_DNA"/>
</dbReference>
<dbReference type="RefSeq" id="XP_776581.1">
    <property type="nucleotide sequence ID" value="XM_771488.1"/>
</dbReference>
<dbReference type="SMR" id="P0CQ81"/>
<dbReference type="EnsemblFungi" id="AAW42594">
    <property type="protein sequence ID" value="AAW42594"/>
    <property type="gene ID" value="CNC06460"/>
</dbReference>
<dbReference type="GeneID" id="4934738"/>
<dbReference type="KEGG" id="cnb:CNBC0740"/>
<dbReference type="VEuPathDB" id="FungiDB:CNBC0740"/>
<dbReference type="HOGENOM" id="CLU_003041_30_2_1"/>
<dbReference type="OrthoDB" id="6413at5206"/>
<dbReference type="GO" id="GO:0000932">
    <property type="term" value="C:P-body"/>
    <property type="evidence" value="ECO:0007669"/>
    <property type="project" value="UniProtKB-SubCell"/>
</dbReference>
<dbReference type="GO" id="GO:0005524">
    <property type="term" value="F:ATP binding"/>
    <property type="evidence" value="ECO:0007669"/>
    <property type="project" value="UniProtKB-KW"/>
</dbReference>
<dbReference type="GO" id="GO:0016887">
    <property type="term" value="F:ATP hydrolysis activity"/>
    <property type="evidence" value="ECO:0007669"/>
    <property type="project" value="RHEA"/>
</dbReference>
<dbReference type="GO" id="GO:0003723">
    <property type="term" value="F:RNA binding"/>
    <property type="evidence" value="ECO:0007669"/>
    <property type="project" value="UniProtKB-KW"/>
</dbReference>
<dbReference type="GO" id="GO:0003724">
    <property type="term" value="F:RNA helicase activity"/>
    <property type="evidence" value="ECO:0007669"/>
    <property type="project" value="UniProtKB-EC"/>
</dbReference>
<dbReference type="GO" id="GO:0006397">
    <property type="term" value="P:mRNA processing"/>
    <property type="evidence" value="ECO:0007669"/>
    <property type="project" value="UniProtKB-KW"/>
</dbReference>
<dbReference type="GO" id="GO:0051028">
    <property type="term" value="P:mRNA transport"/>
    <property type="evidence" value="ECO:0007669"/>
    <property type="project" value="UniProtKB-KW"/>
</dbReference>
<dbReference type="GO" id="GO:0006417">
    <property type="term" value="P:regulation of translation"/>
    <property type="evidence" value="ECO:0007669"/>
    <property type="project" value="UniProtKB-KW"/>
</dbReference>
<dbReference type="CDD" id="cd17940">
    <property type="entry name" value="DEADc_DDX6"/>
    <property type="match status" value="1"/>
</dbReference>
<dbReference type="CDD" id="cd18787">
    <property type="entry name" value="SF2_C_DEAD"/>
    <property type="match status" value="1"/>
</dbReference>
<dbReference type="FunFam" id="3.40.50.300:FF:000114">
    <property type="entry name" value="ATP-dependent RNA helicase DDX6"/>
    <property type="match status" value="1"/>
</dbReference>
<dbReference type="Gene3D" id="3.40.50.300">
    <property type="entry name" value="P-loop containing nucleotide triphosphate hydrolases"/>
    <property type="match status" value="2"/>
</dbReference>
<dbReference type="InterPro" id="IPR011545">
    <property type="entry name" value="DEAD/DEAH_box_helicase_dom"/>
</dbReference>
<dbReference type="InterPro" id="IPR014001">
    <property type="entry name" value="Helicase_ATP-bd"/>
</dbReference>
<dbReference type="InterPro" id="IPR001650">
    <property type="entry name" value="Helicase_C-like"/>
</dbReference>
<dbReference type="InterPro" id="IPR027417">
    <property type="entry name" value="P-loop_NTPase"/>
</dbReference>
<dbReference type="InterPro" id="IPR000629">
    <property type="entry name" value="RNA-helicase_DEAD-box_CS"/>
</dbReference>
<dbReference type="InterPro" id="IPR014014">
    <property type="entry name" value="RNA_helicase_DEAD_Q_motif"/>
</dbReference>
<dbReference type="PANTHER" id="PTHR47960">
    <property type="entry name" value="DEAD-BOX ATP-DEPENDENT RNA HELICASE 50"/>
    <property type="match status" value="1"/>
</dbReference>
<dbReference type="Pfam" id="PF00270">
    <property type="entry name" value="DEAD"/>
    <property type="match status" value="1"/>
</dbReference>
<dbReference type="Pfam" id="PF00271">
    <property type="entry name" value="Helicase_C"/>
    <property type="match status" value="1"/>
</dbReference>
<dbReference type="SMART" id="SM00487">
    <property type="entry name" value="DEXDc"/>
    <property type="match status" value="1"/>
</dbReference>
<dbReference type="SMART" id="SM00490">
    <property type="entry name" value="HELICc"/>
    <property type="match status" value="1"/>
</dbReference>
<dbReference type="SUPFAM" id="SSF52540">
    <property type="entry name" value="P-loop containing nucleoside triphosphate hydrolases"/>
    <property type="match status" value="1"/>
</dbReference>
<dbReference type="PROSITE" id="PS00039">
    <property type="entry name" value="DEAD_ATP_HELICASE"/>
    <property type="match status" value="1"/>
</dbReference>
<dbReference type="PROSITE" id="PS51192">
    <property type="entry name" value="HELICASE_ATP_BIND_1"/>
    <property type="match status" value="1"/>
</dbReference>
<dbReference type="PROSITE" id="PS51194">
    <property type="entry name" value="HELICASE_CTER"/>
    <property type="match status" value="1"/>
</dbReference>
<dbReference type="PROSITE" id="PS51195">
    <property type="entry name" value="Q_MOTIF"/>
    <property type="match status" value="1"/>
</dbReference>
<sequence length="625" mass="68540">MASSSTLLNDDWKQGLAAPPKDLRPQTEDVTATQGSRFEDFGLRRELLMGIYTAGFERPSPIQEQAIPMALTGRDILARAKNGTGKTASFIIPTLNRINTSLSHIQALILVPTRELALQTSQVCKTLGAHIPNLQVMITTGGTTLRDDILRLQQPVHILVGTPGRILDLGSKGIASLNKCGVFVMDEADKLLSEDFMPVIEQTLALCPQERQVMLFSATFPWTVKEFKDQHMVQPYEINLMDELTLKGVTQYYAYVEESQKVHCLNTLFSKLQINQSIIFCNSTNRVELLAKKVTELGYSCFYSHAKMQQAHRNRVFHDFRNGMTRNLVCSDLLTRGIDIQAVNVVINFDFPRTAESYLHRIGRSGRFGHLGLAISLLTLEDRHNLYRIESELGTEIAPIPAVIDPVLYVAPAMVEEERESPPPKPAAIAAPPAQQQPQQRQRQHPPVPSHQAAQQSPAAAPVQQQQQQQQQQQQQQQQQQPQYQQAYGQGPPQPQALFQQQPNSSPAPAPLPSYSQQAPTQAQGPAPVQSPPPAPSTQPQAPAQTPIQGQIPPTQPRAQQQGQQQPGQPGQAQGQSQPNRRPNTGGFRGNGRGQGHRGRGRGRGGQPGQPGAGAGAGQSQQAQA</sequence>
<gene>
    <name type="primary">DHH1</name>
    <name type="ordered locus">CNBC0740</name>
</gene>
<keyword id="KW-0067">ATP-binding</keyword>
<keyword id="KW-0963">Cytoplasm</keyword>
<keyword id="KW-0347">Helicase</keyword>
<keyword id="KW-0378">Hydrolase</keyword>
<keyword id="KW-0507">mRNA processing</keyword>
<keyword id="KW-0509">mRNA transport</keyword>
<keyword id="KW-0547">Nucleotide-binding</keyword>
<keyword id="KW-0694">RNA-binding</keyword>
<keyword id="KW-0810">Translation regulation</keyword>
<keyword id="KW-0813">Transport</keyword>
<name>DHH1_CRYNB</name>